<feature type="chain" id="PRO_0000387156" description="Ribosomal RNA small subunit methyltransferase H">
    <location>
        <begin position="1"/>
        <end position="316"/>
    </location>
</feature>
<feature type="binding site" evidence="1">
    <location>
        <begin position="35"/>
        <end position="37"/>
    </location>
    <ligand>
        <name>S-adenosyl-L-methionine</name>
        <dbReference type="ChEBI" id="CHEBI:59789"/>
    </ligand>
</feature>
<feature type="binding site" evidence="1">
    <location>
        <position position="55"/>
    </location>
    <ligand>
        <name>S-adenosyl-L-methionine</name>
        <dbReference type="ChEBI" id="CHEBI:59789"/>
    </ligand>
</feature>
<feature type="binding site" evidence="1">
    <location>
        <position position="84"/>
    </location>
    <ligand>
        <name>S-adenosyl-L-methionine</name>
        <dbReference type="ChEBI" id="CHEBI:59789"/>
    </ligand>
</feature>
<feature type="binding site" evidence="1">
    <location>
        <position position="105"/>
    </location>
    <ligand>
        <name>S-adenosyl-L-methionine</name>
        <dbReference type="ChEBI" id="CHEBI:59789"/>
    </ligand>
</feature>
<feature type="binding site" evidence="1">
    <location>
        <position position="112"/>
    </location>
    <ligand>
        <name>S-adenosyl-L-methionine</name>
        <dbReference type="ChEBI" id="CHEBI:59789"/>
    </ligand>
</feature>
<reference key="1">
    <citation type="journal article" date="1998" name="Microbiology">
        <title>Unconventional organization of the division and cell wall gene cluster of Streptococcus pneumoniae.</title>
        <authorList>
            <person name="Massidda O."/>
            <person name="Anderluzzi D."/>
            <person name="Friedli L."/>
            <person name="Feger G."/>
        </authorList>
    </citation>
    <scope>NUCLEOTIDE SEQUENCE [GENOMIC DNA]</scope>
</reference>
<reference key="2">
    <citation type="journal article" date="2001" name="Microb. Drug Resist.">
        <title>Annotated draft genomic sequence from a Streptococcus pneumoniae type 19F clinical isolate.</title>
        <authorList>
            <person name="Dopazo J."/>
            <person name="Mendoza A."/>
            <person name="Herrero J."/>
            <person name="Caldara F."/>
            <person name="Humbert Y."/>
            <person name="Friedli L."/>
            <person name="Guerrier M."/>
            <person name="Grand-Schenk E."/>
            <person name="Gandin C."/>
            <person name="de Francesco M."/>
            <person name="Polissi A."/>
            <person name="Buell G."/>
            <person name="Feger G."/>
            <person name="Garcia E."/>
            <person name="Peitsch M."/>
            <person name="Garcia-Bustos J.F."/>
        </authorList>
    </citation>
    <scope>NUCLEOTIDE SEQUENCE [LARGE SCALE GENOMIC DNA]</scope>
    <source>
        <strain>G54</strain>
    </source>
</reference>
<reference key="3">
    <citation type="submission" date="2008-03" db="EMBL/GenBank/DDBJ databases">
        <title>Pneumococcal beta glucoside metabolism investigated by whole genome comparison.</title>
        <authorList>
            <person name="Mulas L."/>
            <person name="Trappetti C."/>
            <person name="Hakenbeck R."/>
            <person name="Iannelli F."/>
            <person name="Pozzi G."/>
            <person name="Davidsen T.M."/>
            <person name="Tettelin H."/>
            <person name="Oggioni M."/>
        </authorList>
    </citation>
    <scope>NUCLEOTIDE SEQUENCE [LARGE SCALE GENOMIC DNA]</scope>
    <source>
        <strain>G54</strain>
    </source>
</reference>
<evidence type="ECO:0000255" key="1">
    <source>
        <dbReference type="HAMAP-Rule" id="MF_01007"/>
    </source>
</evidence>
<comment type="function">
    <text evidence="1">Specifically methylates the N4 position of cytidine in position 1402 (C1402) of 16S rRNA.</text>
</comment>
<comment type="catalytic activity">
    <reaction evidence="1">
        <text>cytidine(1402) in 16S rRNA + S-adenosyl-L-methionine = N(4)-methylcytidine(1402) in 16S rRNA + S-adenosyl-L-homocysteine + H(+)</text>
        <dbReference type="Rhea" id="RHEA:42928"/>
        <dbReference type="Rhea" id="RHEA-COMP:10286"/>
        <dbReference type="Rhea" id="RHEA-COMP:10287"/>
        <dbReference type="ChEBI" id="CHEBI:15378"/>
        <dbReference type="ChEBI" id="CHEBI:57856"/>
        <dbReference type="ChEBI" id="CHEBI:59789"/>
        <dbReference type="ChEBI" id="CHEBI:74506"/>
        <dbReference type="ChEBI" id="CHEBI:82748"/>
        <dbReference type="EC" id="2.1.1.199"/>
    </reaction>
</comment>
<comment type="subcellular location">
    <subcellularLocation>
        <location evidence="1">Cytoplasm</location>
    </subcellularLocation>
</comment>
<comment type="similarity">
    <text evidence="1">Belongs to the methyltransferase superfamily. RsmH family.</text>
</comment>
<dbReference type="EC" id="2.1.1.199" evidence="1"/>
<dbReference type="EMBL" id="AF068903">
    <property type="protein sequence ID" value="AAC95454.1"/>
    <property type="molecule type" value="Genomic_DNA"/>
</dbReference>
<dbReference type="EMBL" id="CP001015">
    <property type="protein sequence ID" value="ACF56670.1"/>
    <property type="molecule type" value="Genomic_DNA"/>
</dbReference>
<dbReference type="SMR" id="B5E6Z2"/>
<dbReference type="KEGG" id="spx:SPG_0303"/>
<dbReference type="HOGENOM" id="CLU_038422_2_0_9"/>
<dbReference type="GO" id="GO:0005737">
    <property type="term" value="C:cytoplasm"/>
    <property type="evidence" value="ECO:0007669"/>
    <property type="project" value="UniProtKB-SubCell"/>
</dbReference>
<dbReference type="GO" id="GO:0071424">
    <property type="term" value="F:rRNA (cytosine-N4-)-methyltransferase activity"/>
    <property type="evidence" value="ECO:0007669"/>
    <property type="project" value="UniProtKB-UniRule"/>
</dbReference>
<dbReference type="GO" id="GO:0070475">
    <property type="term" value="P:rRNA base methylation"/>
    <property type="evidence" value="ECO:0007669"/>
    <property type="project" value="UniProtKB-UniRule"/>
</dbReference>
<dbReference type="FunFam" id="1.10.150.170:FF:000001">
    <property type="entry name" value="Ribosomal RNA small subunit methyltransferase H"/>
    <property type="match status" value="1"/>
</dbReference>
<dbReference type="Gene3D" id="1.10.150.170">
    <property type="entry name" value="Putative methyltransferase TM0872, insert domain"/>
    <property type="match status" value="1"/>
</dbReference>
<dbReference type="Gene3D" id="3.40.50.150">
    <property type="entry name" value="Vaccinia Virus protein VP39"/>
    <property type="match status" value="1"/>
</dbReference>
<dbReference type="HAMAP" id="MF_01007">
    <property type="entry name" value="16SrRNA_methyltr_H"/>
    <property type="match status" value="1"/>
</dbReference>
<dbReference type="InterPro" id="IPR002903">
    <property type="entry name" value="RsmH"/>
</dbReference>
<dbReference type="InterPro" id="IPR023397">
    <property type="entry name" value="SAM-dep_MeTrfase_MraW_recog"/>
</dbReference>
<dbReference type="InterPro" id="IPR029063">
    <property type="entry name" value="SAM-dependent_MTases_sf"/>
</dbReference>
<dbReference type="NCBIfam" id="TIGR00006">
    <property type="entry name" value="16S rRNA (cytosine(1402)-N(4))-methyltransferase RsmH"/>
    <property type="match status" value="1"/>
</dbReference>
<dbReference type="PANTHER" id="PTHR11265:SF0">
    <property type="entry name" value="12S RRNA N4-METHYLCYTIDINE METHYLTRANSFERASE"/>
    <property type="match status" value="1"/>
</dbReference>
<dbReference type="PANTHER" id="PTHR11265">
    <property type="entry name" value="S-ADENOSYL-METHYLTRANSFERASE MRAW"/>
    <property type="match status" value="1"/>
</dbReference>
<dbReference type="Pfam" id="PF01795">
    <property type="entry name" value="Methyltransf_5"/>
    <property type="match status" value="1"/>
</dbReference>
<dbReference type="PIRSF" id="PIRSF004486">
    <property type="entry name" value="MraW"/>
    <property type="match status" value="1"/>
</dbReference>
<dbReference type="SUPFAM" id="SSF81799">
    <property type="entry name" value="Putative methyltransferase TM0872, insert domain"/>
    <property type="match status" value="1"/>
</dbReference>
<dbReference type="SUPFAM" id="SSF53335">
    <property type="entry name" value="S-adenosyl-L-methionine-dependent methyltransferases"/>
    <property type="match status" value="1"/>
</dbReference>
<name>RSMH_STRP4</name>
<keyword id="KW-0963">Cytoplasm</keyword>
<keyword id="KW-0489">Methyltransferase</keyword>
<keyword id="KW-0698">rRNA processing</keyword>
<keyword id="KW-0949">S-adenosyl-L-methionine</keyword>
<keyword id="KW-0808">Transferase</keyword>
<accession>B5E6Z2</accession>
<accession>P72491</accession>
<accession>Q97SK1</accession>
<accession>Q9R8Q8</accession>
<organism>
    <name type="scientific">Streptococcus pneumoniae serotype 19F (strain G54)</name>
    <dbReference type="NCBI Taxonomy" id="512566"/>
    <lineage>
        <taxon>Bacteria</taxon>
        <taxon>Bacillati</taxon>
        <taxon>Bacillota</taxon>
        <taxon>Bacilli</taxon>
        <taxon>Lactobacillales</taxon>
        <taxon>Streptococcaceae</taxon>
        <taxon>Streptococcus</taxon>
    </lineage>
</organism>
<protein>
    <recommendedName>
        <fullName evidence="1">Ribosomal RNA small subunit methyltransferase H</fullName>
        <ecNumber evidence="1">2.1.1.199</ecNumber>
    </recommendedName>
    <alternativeName>
        <fullName evidence="1">16S rRNA m(4)C1402 methyltransferase</fullName>
    </alternativeName>
    <alternativeName>
        <fullName evidence="1">rRNA (cytosine-N(4)-)-methyltransferase RsmH</fullName>
    </alternativeName>
</protein>
<gene>
    <name evidence="1" type="primary">rsmH</name>
    <name type="synonym">mraW</name>
    <name type="ordered locus">SPG_0303</name>
</gene>
<proteinExistence type="inferred from homology"/>
<sequence>MTKEFHHVTVLLHETIDMLDVKPDGIYVDATLGGAGHSEYLLSKLSEKGHLYAFDQDQNAIDNAQKRLAPYIEKGMVTFIKDNFRHLQARLREAGVQEIDGICYDLGVSSPQLDQRERGFSYKKDAPLDMRMNQDASLTAYEVVNHYDYHDLVRIFFKYGEDKFSKQIARKIEQAREVKPIETTTELAEIIKLVKPAKELKKKGHPAKQIFQAIRIEVNDELGAADESIQQAMDMLALDGRISVITFHSLEDRLTKQLFKEASTVEVPKGLPFIPDDLKPKMELVSRKPILPSAEELEANNRSHSAKLRVARKIHK</sequence>